<sequence length="1087" mass="120358">MKNNLSKFVSIFTAFIMIFGTSLFFPHVSAFADDNNANLVSNGDFESGTIDGWIKQGNPTLAATTEEAIGQYSMKVAGRTQTYEGPAYSFLGKMQKGQSYNVSLKVRLVSGQNSSNPLITVTMFREDDNGKHYDTIVWQKQVSEDSWTTVNGTYTLDYTGTLKTLYMYVESPDPTLEYYIDDVVVTPQNPIQVGEISNNQITIQNDIPDLSSVFKDYFPIGVAVDPSRLNDTDPHAQLTAKHFNMLVAENAMKPESLQPTEGNFTFDNADRIVDYAIAHNMKMRGHTLLWHNQVPDWFFQDPSDPTKPASRDLLLQRLKTHITTVLDHFKTKYGAQNPIIGWDVVNEVLDDNGSLRNSKWLQIIGPDYIEKAFEYAHEADPSMKLFINDYNIENNGVKTQAMYDLVKKLKSEGVPISGIGMQMHININSNIDNIKASIEKLASLGVEIQVTELDMNMNGNVSNEALLKQARLYKQLFDLFKAEKQYITAVVFWGVSDDVTWLSKPNAPLLFDSKLQAKPAYWAIADPSKAIPDIQSAKALEGSPTIGANVDSSWKLVKPLYANTYVEGTVGATATVKSMWDTKNLYLLVQVSDNTPSSNDGIEIFVDKNDNKSTSYETDDEHYTIKSDGTGSSDITKYVTSNADGYIVQLAIPIEDISPTLNDKIGLDVRLNDDKGSGSIDTVTVWNDYTNSQDTNTSYFGDIVLSKPAQVATAIYGTPVIDGKIDDIWNKVDAITTNTWVLGSDGATATAKMMWDDKYLYVLADVTDSNLNKSSVNPYEQDSVEVFVDQNNDKTSYYESDDGQYRVNYDNEQSFGGSTNSNGFKSATSLTQSGYIVEEAIPWTSITLLNGTIIGFDLQVNDADENGKRTGIVTWCDPSGNSWQDTSGFGNLLLTGKPSGVLKKSVTFNDIKDNWAKDVIEVLASRHIVEGMTDTQYEPSKTVTRAEFTAMILKLLNIKEEAYNGEFSDVKNGDWYANAIEAAYKAGIIEGDGKNMRPNDSITREEMTSIAMRAYEMLTSYKEENIGATSFNDDKSISDWAKNVVANAAKLGIINGEPSNVFAPKGIATRAEAAAIIYGLLEKSNNL</sequence>
<proteinExistence type="inferred from homology"/>
<organism>
    <name type="scientific">Acetivibrio thermocellus</name>
    <name type="common">Hungateiclostridium thermocellum</name>
    <name type="synonym">Clostridium thermocellum</name>
    <dbReference type="NCBI Taxonomy" id="1515"/>
    <lineage>
        <taxon>Bacteria</taxon>
        <taxon>Bacillati</taxon>
        <taxon>Bacillota</taxon>
        <taxon>Clostridia</taxon>
        <taxon>Eubacteriales</taxon>
        <taxon>Oscillospiraceae</taxon>
        <taxon>Acetivibrio</taxon>
    </lineage>
</organism>
<evidence type="ECO:0000250" key="1"/>
<evidence type="ECO:0000255" key="2"/>
<evidence type="ECO:0000255" key="3">
    <source>
        <dbReference type="PROSITE-ProRule" id="PRU00777"/>
    </source>
</evidence>
<evidence type="ECO:0000255" key="4">
    <source>
        <dbReference type="PROSITE-ProRule" id="PRU01096"/>
    </source>
</evidence>
<evidence type="ECO:0000255" key="5">
    <source>
        <dbReference type="PROSITE-ProRule" id="PRU10061"/>
    </source>
</evidence>
<evidence type="ECO:0000305" key="6"/>
<reference key="1">
    <citation type="submission" date="1993-02" db="EMBL/GenBank/DDBJ databases">
        <authorList>
            <person name="Pack M.Y."/>
            <person name="Jung K.H."/>
        </authorList>
    </citation>
    <scope>NUCLEOTIDE SEQUENCE [GENOMIC DNA]</scope>
</reference>
<keyword id="KW-0119">Carbohydrate metabolism</keyword>
<keyword id="KW-0136">Cellulose degradation</keyword>
<keyword id="KW-0326">Glycosidase</keyword>
<keyword id="KW-0378">Hydrolase</keyword>
<keyword id="KW-0624">Polysaccharide degradation</keyword>
<keyword id="KW-0677">Repeat</keyword>
<keyword id="KW-0732">Signal</keyword>
<dbReference type="EC" id="3.2.1.91"/>
<dbReference type="EMBL" id="M67438">
    <property type="protein sequence ID" value="AAA23227.1"/>
    <property type="molecule type" value="Genomic_DNA"/>
</dbReference>
<dbReference type="PIR" id="S41797">
    <property type="entry name" value="S41797"/>
</dbReference>
<dbReference type="SMR" id="P38535"/>
<dbReference type="CAZy" id="CBM22">
    <property type="family name" value="Carbohydrate-Binding Module Family 22"/>
</dbReference>
<dbReference type="CAZy" id="CBM9">
    <property type="family name" value="Carbohydrate-Binding Module Family 9"/>
</dbReference>
<dbReference type="CAZy" id="GH10">
    <property type="family name" value="Glycoside Hydrolase Family 10"/>
</dbReference>
<dbReference type="GO" id="GO:0030246">
    <property type="term" value="F:carbohydrate binding"/>
    <property type="evidence" value="ECO:0007669"/>
    <property type="project" value="InterPro"/>
</dbReference>
<dbReference type="GO" id="GO:0016162">
    <property type="term" value="F:cellulose 1,4-beta-cellobiosidase activity"/>
    <property type="evidence" value="ECO:0007669"/>
    <property type="project" value="UniProtKB-EC"/>
</dbReference>
<dbReference type="GO" id="GO:0030245">
    <property type="term" value="P:cellulose catabolic process"/>
    <property type="evidence" value="ECO:0007669"/>
    <property type="project" value="UniProtKB-KW"/>
</dbReference>
<dbReference type="CDD" id="cd00005">
    <property type="entry name" value="CBM9_like_1"/>
    <property type="match status" value="1"/>
</dbReference>
<dbReference type="Gene3D" id="2.60.40.1190">
    <property type="match status" value="2"/>
</dbReference>
<dbReference type="Gene3D" id="2.60.120.260">
    <property type="entry name" value="Galactose-binding domain-like"/>
    <property type="match status" value="1"/>
</dbReference>
<dbReference type="Gene3D" id="3.20.20.80">
    <property type="entry name" value="Glycosidases"/>
    <property type="match status" value="1"/>
</dbReference>
<dbReference type="InterPro" id="IPR010502">
    <property type="entry name" value="Carb-bd_dom_fam9"/>
</dbReference>
<dbReference type="InterPro" id="IPR003305">
    <property type="entry name" value="CenC_carb-bd"/>
</dbReference>
<dbReference type="InterPro" id="IPR008979">
    <property type="entry name" value="Galactose-bd-like_sf"/>
</dbReference>
<dbReference type="InterPro" id="IPR044846">
    <property type="entry name" value="GH10"/>
</dbReference>
<dbReference type="InterPro" id="IPR031158">
    <property type="entry name" value="GH10_AS"/>
</dbReference>
<dbReference type="InterPro" id="IPR001000">
    <property type="entry name" value="GH10_dom"/>
</dbReference>
<dbReference type="InterPro" id="IPR018087">
    <property type="entry name" value="Glyco_hydro_5_CS"/>
</dbReference>
<dbReference type="InterPro" id="IPR017853">
    <property type="entry name" value="Glycoside_hydrolase_SF"/>
</dbReference>
<dbReference type="InterPro" id="IPR001119">
    <property type="entry name" value="SLH_dom"/>
</dbReference>
<dbReference type="PANTHER" id="PTHR31490:SF90">
    <property type="entry name" value="ENDO-1,4-BETA-XYLANASE A"/>
    <property type="match status" value="1"/>
</dbReference>
<dbReference type="PANTHER" id="PTHR31490">
    <property type="entry name" value="GLYCOSYL HYDROLASE"/>
    <property type="match status" value="1"/>
</dbReference>
<dbReference type="Pfam" id="PF06452">
    <property type="entry name" value="CBM9_1"/>
    <property type="match status" value="2"/>
</dbReference>
<dbReference type="Pfam" id="PF02018">
    <property type="entry name" value="CBM_4_9"/>
    <property type="match status" value="1"/>
</dbReference>
<dbReference type="Pfam" id="PF00331">
    <property type="entry name" value="Glyco_hydro_10"/>
    <property type="match status" value="1"/>
</dbReference>
<dbReference type="Pfam" id="PF00395">
    <property type="entry name" value="SLH"/>
    <property type="match status" value="3"/>
</dbReference>
<dbReference type="PRINTS" id="PR00134">
    <property type="entry name" value="GLHYDRLASE10"/>
</dbReference>
<dbReference type="SMART" id="SM00633">
    <property type="entry name" value="Glyco_10"/>
    <property type="match status" value="1"/>
</dbReference>
<dbReference type="SUPFAM" id="SSF51445">
    <property type="entry name" value="(Trans)glycosidases"/>
    <property type="match status" value="1"/>
</dbReference>
<dbReference type="SUPFAM" id="SSF49344">
    <property type="entry name" value="CBD9-like"/>
    <property type="match status" value="2"/>
</dbReference>
<dbReference type="SUPFAM" id="SSF49785">
    <property type="entry name" value="Galactose-binding domain-like"/>
    <property type="match status" value="1"/>
</dbReference>
<dbReference type="PROSITE" id="PS00591">
    <property type="entry name" value="GH10_1"/>
    <property type="match status" value="1"/>
</dbReference>
<dbReference type="PROSITE" id="PS51760">
    <property type="entry name" value="GH10_2"/>
    <property type="match status" value="1"/>
</dbReference>
<dbReference type="PROSITE" id="PS00659">
    <property type="entry name" value="GLYCOSYL_HYDROL_F5"/>
    <property type="match status" value="1"/>
</dbReference>
<dbReference type="PROSITE" id="PS51272">
    <property type="entry name" value="SLH"/>
    <property type="match status" value="3"/>
</dbReference>
<comment type="catalytic activity">
    <reaction>
        <text>Hydrolysis of (1-&gt;4)-beta-D-glucosidic linkages in cellulose and cellotetraose, releasing cellobiose from the non-reducing ends of the chains.</text>
        <dbReference type="EC" id="3.2.1.91"/>
    </reaction>
</comment>
<comment type="similarity">
    <text evidence="6">Belongs to the glycosyl hydrolase 10 (cellulase F) family.</text>
</comment>
<accession>P38535</accession>
<protein>
    <recommendedName>
        <fullName>Exoglucanase XynX</fullName>
        <ecNumber>3.2.1.91</ecNumber>
    </recommendedName>
    <alternativeName>
        <fullName>1,4-beta-cellobiohydrolase</fullName>
    </alternativeName>
    <alternativeName>
        <fullName>Exocellobiohydrolase</fullName>
    </alternativeName>
</protein>
<name>XYNX_ACETH</name>
<feature type="signal peptide" evidence="2">
    <location>
        <begin position="1"/>
        <end position="30"/>
    </location>
</feature>
<feature type="chain" id="PRO_0000007982" description="Exoglucanase XynX">
    <location>
        <begin position="31"/>
        <end position="1087"/>
    </location>
</feature>
<feature type="domain" description="CBM-cenC">
    <location>
        <begin position="37"/>
        <end position="188"/>
    </location>
</feature>
<feature type="domain" description="GH10" evidence="4">
    <location>
        <begin position="204"/>
        <end position="527"/>
    </location>
</feature>
<feature type="domain" description="SLH 1" evidence="3">
    <location>
        <begin position="903"/>
        <end position="966"/>
    </location>
</feature>
<feature type="domain" description="SLH 2" evidence="3">
    <location>
        <begin position="967"/>
        <end position="1025"/>
    </location>
</feature>
<feature type="domain" description="SLH 3" evidence="3">
    <location>
        <begin position="1028"/>
        <end position="1087"/>
    </location>
</feature>
<feature type="active site" description="Proton donor" evidence="1">
    <location>
        <position position="347"/>
    </location>
</feature>
<feature type="active site" evidence="1">
    <location>
        <position position="389"/>
    </location>
</feature>
<feature type="active site" description="Nucleophile" evidence="5">
    <location>
        <position position="452"/>
    </location>
</feature>
<gene>
    <name type="primary">xynX</name>
</gene>